<accession>A0ZZV1</accession>
<comment type="similarity">
    <text evidence="1">Belongs to the bacterial ribosomal protein bL28 family.</text>
</comment>
<dbReference type="EMBL" id="AP009256">
    <property type="protein sequence ID" value="BAF38984.1"/>
    <property type="molecule type" value="Genomic_DNA"/>
</dbReference>
<dbReference type="RefSeq" id="WP_003807649.1">
    <property type="nucleotide sequence ID" value="NZ_CAXVNC010000001.1"/>
</dbReference>
<dbReference type="SMR" id="A0ZZV1"/>
<dbReference type="STRING" id="367928.BAD_0203"/>
<dbReference type="PaxDb" id="1680-BADO_0211"/>
<dbReference type="GeneID" id="45598725"/>
<dbReference type="KEGG" id="bad:BAD_0203"/>
<dbReference type="HOGENOM" id="CLU_064548_7_0_11"/>
<dbReference type="Proteomes" id="UP000008702">
    <property type="component" value="Chromosome"/>
</dbReference>
<dbReference type="GO" id="GO:1990904">
    <property type="term" value="C:ribonucleoprotein complex"/>
    <property type="evidence" value="ECO:0007669"/>
    <property type="project" value="UniProtKB-KW"/>
</dbReference>
<dbReference type="GO" id="GO:0005840">
    <property type="term" value="C:ribosome"/>
    <property type="evidence" value="ECO:0007669"/>
    <property type="project" value="UniProtKB-KW"/>
</dbReference>
<dbReference type="GO" id="GO:0003735">
    <property type="term" value="F:structural constituent of ribosome"/>
    <property type="evidence" value="ECO:0007669"/>
    <property type="project" value="InterPro"/>
</dbReference>
<dbReference type="GO" id="GO:0006412">
    <property type="term" value="P:translation"/>
    <property type="evidence" value="ECO:0007669"/>
    <property type="project" value="UniProtKB-UniRule"/>
</dbReference>
<dbReference type="Gene3D" id="2.30.170.40">
    <property type="entry name" value="Ribosomal protein L28/L24"/>
    <property type="match status" value="1"/>
</dbReference>
<dbReference type="HAMAP" id="MF_00373">
    <property type="entry name" value="Ribosomal_bL28"/>
    <property type="match status" value="1"/>
</dbReference>
<dbReference type="InterPro" id="IPR050096">
    <property type="entry name" value="Bacterial_rp_bL28"/>
</dbReference>
<dbReference type="InterPro" id="IPR026569">
    <property type="entry name" value="Ribosomal_bL28"/>
</dbReference>
<dbReference type="InterPro" id="IPR034704">
    <property type="entry name" value="Ribosomal_bL28/bL31-like_sf"/>
</dbReference>
<dbReference type="InterPro" id="IPR001383">
    <property type="entry name" value="Ribosomal_bL28_bact-type"/>
</dbReference>
<dbReference type="InterPro" id="IPR037147">
    <property type="entry name" value="Ribosomal_bL28_sf"/>
</dbReference>
<dbReference type="NCBIfam" id="TIGR00009">
    <property type="entry name" value="L28"/>
    <property type="match status" value="1"/>
</dbReference>
<dbReference type="PANTHER" id="PTHR39080">
    <property type="entry name" value="50S RIBOSOMAL PROTEIN L28"/>
    <property type="match status" value="1"/>
</dbReference>
<dbReference type="PANTHER" id="PTHR39080:SF1">
    <property type="entry name" value="LARGE RIBOSOMAL SUBUNIT PROTEIN BL28A"/>
    <property type="match status" value="1"/>
</dbReference>
<dbReference type="Pfam" id="PF00830">
    <property type="entry name" value="Ribosomal_L28"/>
    <property type="match status" value="1"/>
</dbReference>
<dbReference type="SUPFAM" id="SSF143800">
    <property type="entry name" value="L28p-like"/>
    <property type="match status" value="1"/>
</dbReference>
<protein>
    <recommendedName>
        <fullName evidence="1">Large ribosomal subunit protein bL28</fullName>
    </recommendedName>
    <alternativeName>
        <fullName evidence="2">50S ribosomal protein L28</fullName>
    </alternativeName>
</protein>
<feature type="chain" id="PRO_1000007176" description="Large ribosomal subunit protein bL28">
    <location>
        <begin position="1"/>
        <end position="64"/>
    </location>
</feature>
<name>RL28_BIFAA</name>
<organism>
    <name type="scientific">Bifidobacterium adolescentis (strain ATCC 15703 / DSM 20083 / NCTC 11814 / E194a)</name>
    <dbReference type="NCBI Taxonomy" id="367928"/>
    <lineage>
        <taxon>Bacteria</taxon>
        <taxon>Bacillati</taxon>
        <taxon>Actinomycetota</taxon>
        <taxon>Actinomycetes</taxon>
        <taxon>Bifidobacteriales</taxon>
        <taxon>Bifidobacteriaceae</taxon>
        <taxon>Bifidobacterium</taxon>
    </lineage>
</organism>
<keyword id="KW-1185">Reference proteome</keyword>
<keyword id="KW-0687">Ribonucleoprotein</keyword>
<keyword id="KW-0689">Ribosomal protein</keyword>
<reference key="1">
    <citation type="submission" date="2006-12" db="EMBL/GenBank/DDBJ databases">
        <title>Bifidobacterium adolescentis complete genome sequence.</title>
        <authorList>
            <person name="Suzuki T."/>
            <person name="Tsuda Y."/>
            <person name="Kanou N."/>
            <person name="Inoue T."/>
            <person name="Kumazaki K."/>
            <person name="Nagano S."/>
            <person name="Hirai S."/>
            <person name="Tanaka K."/>
            <person name="Watanabe K."/>
        </authorList>
    </citation>
    <scope>NUCLEOTIDE SEQUENCE [LARGE SCALE GENOMIC DNA]</scope>
    <source>
        <strain>ATCC 15703 / DSM 20083 / NCTC 11814 / E194a</strain>
    </source>
</reference>
<sequence length="64" mass="7077">MAARCAVCGKGPQTGFTVSHSHIRNKRTFRPNLQPVRTTIDGENVRVRVCVKCIKAGKVQRVEA</sequence>
<evidence type="ECO:0000255" key="1">
    <source>
        <dbReference type="HAMAP-Rule" id="MF_00373"/>
    </source>
</evidence>
<evidence type="ECO:0000305" key="2"/>
<proteinExistence type="inferred from homology"/>
<gene>
    <name evidence="1" type="primary">rpmB</name>
    <name type="ordered locus">BAD_0203</name>
</gene>